<name>FMT_DELAS</name>
<comment type="function">
    <text evidence="1">Attaches a formyl group to the free amino group of methionyl-tRNA(fMet). The formyl group appears to play a dual role in the initiator identity of N-formylmethionyl-tRNA by promoting its recognition by IF2 and preventing the misappropriation of this tRNA by the elongation apparatus.</text>
</comment>
<comment type="catalytic activity">
    <reaction evidence="1">
        <text>L-methionyl-tRNA(fMet) + (6R)-10-formyltetrahydrofolate = N-formyl-L-methionyl-tRNA(fMet) + (6S)-5,6,7,8-tetrahydrofolate + H(+)</text>
        <dbReference type="Rhea" id="RHEA:24380"/>
        <dbReference type="Rhea" id="RHEA-COMP:9952"/>
        <dbReference type="Rhea" id="RHEA-COMP:9953"/>
        <dbReference type="ChEBI" id="CHEBI:15378"/>
        <dbReference type="ChEBI" id="CHEBI:57453"/>
        <dbReference type="ChEBI" id="CHEBI:78530"/>
        <dbReference type="ChEBI" id="CHEBI:78844"/>
        <dbReference type="ChEBI" id="CHEBI:195366"/>
        <dbReference type="EC" id="2.1.2.9"/>
    </reaction>
</comment>
<comment type="similarity">
    <text evidence="1">Belongs to the Fmt family.</text>
</comment>
<sequence>MRVIFAGTPEFARVALERLLAAGFTVPLVLTQPDRPAGRGMKLQASPVKQCALEHGIAVAQPRSLRLDGKYPEEAAAARAAIEAAQADVMVVAAYGLILPQWVLDTPPRGCLNIHASLLPRWRGAAPIHRAIEAGDAETGVTIMQMDAGLDTGDMCLVERLPITADDTTASLHDKLADLGGRLIVEALEMSACGGLPRTPQPAEGVNYAHKIEKAESQIDWRQDAEAIARRLRAFNPFPGGATQYGDESIKVWEAHADPAIAVGTAAPGTVLSAGADGVRVACGNGVLCMTLLQRAGGKRLAAGDFLRGFDLPEGAVLDGAASGGTP</sequence>
<feature type="chain" id="PRO_1000098398" description="Methionyl-tRNA formyltransferase">
    <location>
        <begin position="1"/>
        <end position="327"/>
    </location>
</feature>
<feature type="binding site" evidence="1">
    <location>
        <begin position="117"/>
        <end position="120"/>
    </location>
    <ligand>
        <name>(6S)-5,6,7,8-tetrahydrofolate</name>
        <dbReference type="ChEBI" id="CHEBI:57453"/>
    </ligand>
</feature>
<keyword id="KW-0648">Protein biosynthesis</keyword>
<keyword id="KW-1185">Reference proteome</keyword>
<keyword id="KW-0808">Transferase</keyword>
<dbReference type="EC" id="2.1.2.9" evidence="1"/>
<dbReference type="EMBL" id="CP000884">
    <property type="protein sequence ID" value="ABX33477.1"/>
    <property type="molecule type" value="Genomic_DNA"/>
</dbReference>
<dbReference type="RefSeq" id="WP_012202763.1">
    <property type="nucleotide sequence ID" value="NC_010002.1"/>
</dbReference>
<dbReference type="SMR" id="A9BS67"/>
<dbReference type="STRING" id="398578.Daci_0831"/>
<dbReference type="GeneID" id="24116519"/>
<dbReference type="KEGG" id="dac:Daci_0831"/>
<dbReference type="eggNOG" id="COG0223">
    <property type="taxonomic scope" value="Bacteria"/>
</dbReference>
<dbReference type="HOGENOM" id="CLU_033347_1_2_4"/>
<dbReference type="Proteomes" id="UP000000784">
    <property type="component" value="Chromosome"/>
</dbReference>
<dbReference type="GO" id="GO:0005829">
    <property type="term" value="C:cytosol"/>
    <property type="evidence" value="ECO:0007669"/>
    <property type="project" value="TreeGrafter"/>
</dbReference>
<dbReference type="GO" id="GO:0004479">
    <property type="term" value="F:methionyl-tRNA formyltransferase activity"/>
    <property type="evidence" value="ECO:0007669"/>
    <property type="project" value="UniProtKB-UniRule"/>
</dbReference>
<dbReference type="CDD" id="cd08646">
    <property type="entry name" value="FMT_core_Met-tRNA-FMT_N"/>
    <property type="match status" value="1"/>
</dbReference>
<dbReference type="CDD" id="cd08704">
    <property type="entry name" value="Met_tRNA_FMT_C"/>
    <property type="match status" value="1"/>
</dbReference>
<dbReference type="FunFam" id="3.40.50.12230:FF:000001">
    <property type="entry name" value="Methionyl-tRNA formyltransferase"/>
    <property type="match status" value="1"/>
</dbReference>
<dbReference type="Gene3D" id="3.40.50.12230">
    <property type="match status" value="1"/>
</dbReference>
<dbReference type="HAMAP" id="MF_00182">
    <property type="entry name" value="Formyl_trans"/>
    <property type="match status" value="1"/>
</dbReference>
<dbReference type="InterPro" id="IPR005794">
    <property type="entry name" value="Fmt"/>
</dbReference>
<dbReference type="InterPro" id="IPR005793">
    <property type="entry name" value="Formyl_trans_C"/>
</dbReference>
<dbReference type="InterPro" id="IPR002376">
    <property type="entry name" value="Formyl_transf_N"/>
</dbReference>
<dbReference type="InterPro" id="IPR036477">
    <property type="entry name" value="Formyl_transf_N_sf"/>
</dbReference>
<dbReference type="InterPro" id="IPR011034">
    <property type="entry name" value="Formyl_transferase-like_C_sf"/>
</dbReference>
<dbReference type="InterPro" id="IPR044135">
    <property type="entry name" value="Met-tRNA-FMT_C"/>
</dbReference>
<dbReference type="InterPro" id="IPR041711">
    <property type="entry name" value="Met-tRNA-FMT_N"/>
</dbReference>
<dbReference type="NCBIfam" id="TIGR00460">
    <property type="entry name" value="fmt"/>
    <property type="match status" value="1"/>
</dbReference>
<dbReference type="PANTHER" id="PTHR11138">
    <property type="entry name" value="METHIONYL-TRNA FORMYLTRANSFERASE"/>
    <property type="match status" value="1"/>
</dbReference>
<dbReference type="PANTHER" id="PTHR11138:SF5">
    <property type="entry name" value="METHIONYL-TRNA FORMYLTRANSFERASE, MITOCHONDRIAL"/>
    <property type="match status" value="1"/>
</dbReference>
<dbReference type="Pfam" id="PF02911">
    <property type="entry name" value="Formyl_trans_C"/>
    <property type="match status" value="1"/>
</dbReference>
<dbReference type="Pfam" id="PF00551">
    <property type="entry name" value="Formyl_trans_N"/>
    <property type="match status" value="1"/>
</dbReference>
<dbReference type="SUPFAM" id="SSF50486">
    <property type="entry name" value="FMT C-terminal domain-like"/>
    <property type="match status" value="1"/>
</dbReference>
<dbReference type="SUPFAM" id="SSF53328">
    <property type="entry name" value="Formyltransferase"/>
    <property type="match status" value="1"/>
</dbReference>
<organism>
    <name type="scientific">Delftia acidovorans (strain DSM 14801 / SPH-1)</name>
    <dbReference type="NCBI Taxonomy" id="398578"/>
    <lineage>
        <taxon>Bacteria</taxon>
        <taxon>Pseudomonadati</taxon>
        <taxon>Pseudomonadota</taxon>
        <taxon>Betaproteobacteria</taxon>
        <taxon>Burkholderiales</taxon>
        <taxon>Comamonadaceae</taxon>
        <taxon>Delftia</taxon>
    </lineage>
</organism>
<protein>
    <recommendedName>
        <fullName evidence="1">Methionyl-tRNA formyltransferase</fullName>
        <ecNumber evidence="1">2.1.2.9</ecNumber>
    </recommendedName>
</protein>
<proteinExistence type="inferred from homology"/>
<evidence type="ECO:0000255" key="1">
    <source>
        <dbReference type="HAMAP-Rule" id="MF_00182"/>
    </source>
</evidence>
<gene>
    <name evidence="1" type="primary">fmt</name>
    <name type="ordered locus">Daci_0831</name>
</gene>
<reference key="1">
    <citation type="submission" date="2007-11" db="EMBL/GenBank/DDBJ databases">
        <title>Complete sequence of Delftia acidovorans DSM 14801 / SPH-1.</title>
        <authorList>
            <person name="Copeland A."/>
            <person name="Lucas S."/>
            <person name="Lapidus A."/>
            <person name="Barry K."/>
            <person name="Glavina del Rio T."/>
            <person name="Dalin E."/>
            <person name="Tice H."/>
            <person name="Pitluck S."/>
            <person name="Lowry S."/>
            <person name="Clum A."/>
            <person name="Schmutz J."/>
            <person name="Larimer F."/>
            <person name="Land M."/>
            <person name="Hauser L."/>
            <person name="Kyrpides N."/>
            <person name="Kim E."/>
            <person name="Schleheck D."/>
            <person name="Richardson P."/>
        </authorList>
    </citation>
    <scope>NUCLEOTIDE SEQUENCE [LARGE SCALE GENOMIC DNA]</scope>
    <source>
        <strain>DSM 14801 / SPH-1</strain>
    </source>
</reference>
<accession>A9BS67</accession>